<gene>
    <name evidence="1" type="primary">MT-ATP6</name>
    <name type="synonym">ATP6</name>
    <name type="synonym">ATPASE6</name>
    <name type="synonym">MTATP6</name>
</gene>
<accession>Q36454</accession>
<comment type="function">
    <text evidence="1">Subunit a, of the mitochondrial membrane ATP synthase complex (F(1)F(0) ATP synthase or Complex V) that produces ATP from ADP in the presence of a proton gradient across the membrane which is generated by electron transport complexes of the respiratory chain. ATP synthase complex consist of a soluble F(1) head domain - the catalytic core - and a membrane F(1) domain - the membrane proton channel. These two domains are linked by a central stalk rotating inside the F(1) region and a stationary peripheral stalk. During catalysis, ATP synthesis in the catalytic domain of F(1) is coupled via a rotary mechanism of the central stalk subunits to proton translocation. With the subunit c (ATP5MC1), forms the proton-conducting channel in the F(0) domain, that contains two crucial half-channels (inlet and outlet) that facilitate proton movement from the mitochondrial intermembrane space (IMS) into the matrix. Protons are taken up via the inlet half-channel and released through the outlet half-channel, following a Grotthuss mechanism.</text>
</comment>
<comment type="catalytic activity">
    <reaction evidence="1">
        <text>H(+)(in) = H(+)(out)</text>
        <dbReference type="Rhea" id="RHEA:34979"/>
        <dbReference type="ChEBI" id="CHEBI:15378"/>
    </reaction>
</comment>
<comment type="subunit">
    <text evidence="1">Component of the ATP synthase complex composed at least of ATP5F1A/subunit alpha, ATP5F1B/subunit beta, ATP5MC1/subunit c (homooctomer), MT-ATP6/subunit a, MT-ATP8/subunit 8, ATP5ME/subunit e, ATP5MF/subunit f, ATP5MG/subunit g, ATP5MK/subunit k, ATP5MJ/subunit j, ATP5F1C/subunit gamma, ATP5F1D/subunit delta, ATP5F1E/subunit epsilon, ATP5PF/subunit F6, ATP5PB/subunit b, ATP5PD/subunit d, ATP5PO/subunit OSCP. ATP synthase complex consists of a soluble F(1) head domain (subunits alpha(3) and beta(3)) - the catalytic core - and a membrane F(0) domain - the membrane proton channel (subunits c, a, 8, e, f, g, k and j). These two domains are linked by a central stalk (subunits gamma, delta, and epsilon) rotating inside the F1 region and a stationary peripheral stalk (subunits F6, b, d, and OSCP). Interacts with DNAJC30; interaction is direct.</text>
</comment>
<comment type="subcellular location">
    <subcellularLocation>
        <location>Mitochondrion inner membrane</location>
        <topology>Multi-pass membrane protein</topology>
    </subcellularLocation>
</comment>
<comment type="similarity">
    <text evidence="3">Belongs to the ATPase A chain family.</text>
</comment>
<keyword id="KW-0066">ATP synthesis</keyword>
<keyword id="KW-0138">CF(0)</keyword>
<keyword id="KW-0375">Hydrogen ion transport</keyword>
<keyword id="KW-0406">Ion transport</keyword>
<keyword id="KW-0472">Membrane</keyword>
<keyword id="KW-0496">Mitochondrion</keyword>
<keyword id="KW-0999">Mitochondrion inner membrane</keyword>
<keyword id="KW-1185">Reference proteome</keyword>
<keyword id="KW-0812">Transmembrane</keyword>
<keyword id="KW-1133">Transmembrane helix</keyword>
<keyword id="KW-0813">Transport</keyword>
<proteinExistence type="inferred from homology"/>
<organism>
    <name type="scientific">Ornithorhynchus anatinus</name>
    <name type="common">Duckbill platypus</name>
    <dbReference type="NCBI Taxonomy" id="9258"/>
    <lineage>
        <taxon>Eukaryota</taxon>
        <taxon>Metazoa</taxon>
        <taxon>Chordata</taxon>
        <taxon>Craniata</taxon>
        <taxon>Vertebrata</taxon>
        <taxon>Euteleostomi</taxon>
        <taxon>Mammalia</taxon>
        <taxon>Monotremata</taxon>
        <taxon>Ornithorhynchidae</taxon>
        <taxon>Ornithorhynchus</taxon>
    </lineage>
</organism>
<evidence type="ECO:0000250" key="1">
    <source>
        <dbReference type="UniProtKB" id="P00846"/>
    </source>
</evidence>
<evidence type="ECO:0000255" key="2"/>
<evidence type="ECO:0000305" key="3"/>
<evidence type="ECO:0000312" key="4">
    <source>
        <dbReference type="Proteomes" id="UP000002279"/>
    </source>
</evidence>
<name>ATP6_ORNAN</name>
<feature type="chain" id="PRO_0000082146" description="ATP synthase F(0) complex subunit a">
    <location>
        <begin position="1"/>
        <end position="226"/>
    </location>
</feature>
<feature type="transmembrane region" description="Helical" evidence="2">
    <location>
        <begin position="6"/>
        <end position="26"/>
    </location>
</feature>
<feature type="transmembrane region" description="Helical" evidence="2">
    <location>
        <begin position="68"/>
        <end position="88"/>
    </location>
</feature>
<feature type="transmembrane region" description="Helical" evidence="2">
    <location>
        <begin position="97"/>
        <end position="117"/>
    </location>
</feature>
<feature type="transmembrane region" description="Helical" evidence="2">
    <location>
        <begin position="138"/>
        <end position="158"/>
    </location>
</feature>
<feature type="transmembrane region" description="Helical" evidence="2">
    <location>
        <begin position="164"/>
        <end position="184"/>
    </location>
</feature>
<feature type="transmembrane region" description="Helical" evidence="2">
    <location>
        <begin position="193"/>
        <end position="213"/>
    </location>
</feature>
<reference key="1">
    <citation type="journal article" date="1996" name="J. Mol. Evol.">
        <title>The mitochondrial genome of a monotreme--the platypus (Ornithorhynchus anatinus).</title>
        <authorList>
            <person name="Janke A."/>
            <person name="Gemmell N.J."/>
            <person name="Feldmaier-Fuchs G."/>
            <person name="von Haeseler A."/>
            <person name="Paabo S."/>
        </authorList>
    </citation>
    <scope>NUCLEOTIDE SEQUENCE [LARGE SCALE GENOMIC DNA]</scope>
    <source>
        <strain evidence="4">Glennie</strain>
    </source>
</reference>
<protein>
    <recommendedName>
        <fullName evidence="1">ATP synthase F(0) complex subunit a</fullName>
    </recommendedName>
    <alternativeName>
        <fullName>F-ATPase protein 6</fullName>
    </alternativeName>
    <alternativeName>
        <fullName evidence="1">Proton-conducting channel, ATP synthase F(0) complex subunit a</fullName>
    </alternativeName>
</protein>
<dbReference type="EMBL" id="X83427">
    <property type="protein sequence ID" value="CAA58460.1"/>
    <property type="molecule type" value="Genomic_DNA"/>
</dbReference>
<dbReference type="PIR" id="F58888">
    <property type="entry name" value="F58888"/>
</dbReference>
<dbReference type="RefSeq" id="NP_008048.1">
    <property type="nucleotide sequence ID" value="NC_000891.1"/>
</dbReference>
<dbReference type="SMR" id="Q36454"/>
<dbReference type="FunCoup" id="Q36454">
    <property type="interactions" value="336"/>
</dbReference>
<dbReference type="STRING" id="9258.ENSOANP00000024992"/>
<dbReference type="Ensembl" id="ENSOANT00000028496.1">
    <property type="protein sequence ID" value="ENSOANP00000024992.1"/>
    <property type="gene ID" value="ENSOANG00000019372.1"/>
</dbReference>
<dbReference type="GeneID" id="808705"/>
<dbReference type="KEGG" id="oaa:808705"/>
<dbReference type="CTD" id="4508"/>
<dbReference type="eggNOG" id="KOG4665">
    <property type="taxonomic scope" value="Eukaryota"/>
</dbReference>
<dbReference type="GeneTree" id="ENSGT00390000005568"/>
<dbReference type="HOGENOM" id="CLU_041018_0_2_1"/>
<dbReference type="InParanoid" id="Q36454"/>
<dbReference type="OMA" id="FFDQFMS"/>
<dbReference type="OrthoDB" id="5976622at2759"/>
<dbReference type="TreeFam" id="TF343395"/>
<dbReference type="Proteomes" id="UP000002279">
    <property type="component" value="Mitochondrion"/>
</dbReference>
<dbReference type="Bgee" id="ENSOANG00000019372">
    <property type="expression patterns" value="Expressed in heart and 7 other cell types or tissues"/>
</dbReference>
<dbReference type="GO" id="GO:0005743">
    <property type="term" value="C:mitochondrial inner membrane"/>
    <property type="evidence" value="ECO:0007669"/>
    <property type="project" value="UniProtKB-SubCell"/>
</dbReference>
<dbReference type="GO" id="GO:0045259">
    <property type="term" value="C:proton-transporting ATP synthase complex"/>
    <property type="evidence" value="ECO:0000250"/>
    <property type="project" value="UniProtKB"/>
</dbReference>
<dbReference type="GO" id="GO:0015252">
    <property type="term" value="F:proton channel activity"/>
    <property type="evidence" value="ECO:0000250"/>
    <property type="project" value="UniProtKB"/>
</dbReference>
<dbReference type="GO" id="GO:0046933">
    <property type="term" value="F:proton-transporting ATP synthase activity, rotational mechanism"/>
    <property type="evidence" value="ECO:0007669"/>
    <property type="project" value="Ensembl"/>
</dbReference>
<dbReference type="GO" id="GO:0015986">
    <property type="term" value="P:proton motive force-driven ATP synthesis"/>
    <property type="evidence" value="ECO:0000250"/>
    <property type="project" value="UniProtKB"/>
</dbReference>
<dbReference type="GO" id="GO:0042776">
    <property type="term" value="P:proton motive force-driven mitochondrial ATP synthesis"/>
    <property type="evidence" value="ECO:0007669"/>
    <property type="project" value="Ensembl"/>
</dbReference>
<dbReference type="GO" id="GO:1902600">
    <property type="term" value="P:proton transmembrane transport"/>
    <property type="evidence" value="ECO:0000250"/>
    <property type="project" value="UniProtKB"/>
</dbReference>
<dbReference type="CDD" id="cd00310">
    <property type="entry name" value="ATP-synt_Fo_a_6"/>
    <property type="match status" value="1"/>
</dbReference>
<dbReference type="FunFam" id="1.20.120.220:FF:000004">
    <property type="entry name" value="ATP synthase subunit a"/>
    <property type="match status" value="1"/>
</dbReference>
<dbReference type="Gene3D" id="1.20.120.220">
    <property type="entry name" value="ATP synthase, F0 complex, subunit A"/>
    <property type="match status" value="1"/>
</dbReference>
<dbReference type="InterPro" id="IPR000568">
    <property type="entry name" value="ATP_synth_F0_asu"/>
</dbReference>
<dbReference type="InterPro" id="IPR023011">
    <property type="entry name" value="ATP_synth_F0_asu_AS"/>
</dbReference>
<dbReference type="InterPro" id="IPR045083">
    <property type="entry name" value="ATP_synth_F0_asu_bact/mt"/>
</dbReference>
<dbReference type="InterPro" id="IPR035908">
    <property type="entry name" value="F0_ATP_A_sf"/>
</dbReference>
<dbReference type="NCBIfam" id="TIGR01131">
    <property type="entry name" value="ATP_synt_6_or_A"/>
    <property type="match status" value="1"/>
</dbReference>
<dbReference type="PANTHER" id="PTHR11410">
    <property type="entry name" value="ATP SYNTHASE SUBUNIT A"/>
    <property type="match status" value="1"/>
</dbReference>
<dbReference type="PANTHER" id="PTHR11410:SF0">
    <property type="entry name" value="ATP SYNTHASE SUBUNIT A"/>
    <property type="match status" value="1"/>
</dbReference>
<dbReference type="Pfam" id="PF00119">
    <property type="entry name" value="ATP-synt_A"/>
    <property type="match status" value="1"/>
</dbReference>
<dbReference type="PRINTS" id="PR00123">
    <property type="entry name" value="ATPASEA"/>
</dbReference>
<dbReference type="SUPFAM" id="SSF81336">
    <property type="entry name" value="F1F0 ATP synthase subunit A"/>
    <property type="match status" value="1"/>
</dbReference>
<dbReference type="PROSITE" id="PS00449">
    <property type="entry name" value="ATPASE_A"/>
    <property type="match status" value="1"/>
</dbReference>
<sequence>MNENLFAPFITPTVLGISVLPLIMIFPCLLFSTSNRWVPNRLIALQLWLVRLITKQMMMMHNKQGRMWTLMLITLIIFIASTNLLGLLPYTFTPTTQLSMNMGMAIPLWMGTVLMGFRNKPKASLAHFLPQGTPTPLIPMLIIIETISLFIQPLALAVRLTANITAGHLLIHLIGSATLALSSISLTVSTITFTILFLLTILEFAVALIQAYVFTLLVSLYLHDNT</sequence>
<geneLocation type="mitochondrion"/>